<dbReference type="EMBL" id="L29107">
    <property type="protein sequence ID" value="AAA21715.1"/>
    <property type="molecule type" value="Genomic_DNA"/>
</dbReference>
<dbReference type="SMR" id="P40275"/>
<dbReference type="GO" id="GO:0000786">
    <property type="term" value="C:nucleosome"/>
    <property type="evidence" value="ECO:0007669"/>
    <property type="project" value="InterPro"/>
</dbReference>
<dbReference type="GO" id="GO:0005634">
    <property type="term" value="C:nucleus"/>
    <property type="evidence" value="ECO:0007669"/>
    <property type="project" value="UniProtKB-SubCell"/>
</dbReference>
<dbReference type="GO" id="GO:0003677">
    <property type="term" value="F:DNA binding"/>
    <property type="evidence" value="ECO:0007669"/>
    <property type="project" value="UniProtKB-KW"/>
</dbReference>
<dbReference type="GO" id="GO:0030527">
    <property type="term" value="F:structural constituent of chromatin"/>
    <property type="evidence" value="ECO:0007669"/>
    <property type="project" value="InterPro"/>
</dbReference>
<dbReference type="GO" id="GO:0006334">
    <property type="term" value="P:nucleosome assembly"/>
    <property type="evidence" value="ECO:0007669"/>
    <property type="project" value="InterPro"/>
</dbReference>
<dbReference type="CDD" id="cd00073">
    <property type="entry name" value="H15"/>
    <property type="match status" value="1"/>
</dbReference>
<dbReference type="FunFam" id="1.10.10.10:FF:000140">
    <property type="entry name" value="Histone H1.0"/>
    <property type="match status" value="1"/>
</dbReference>
<dbReference type="Gene3D" id="1.10.10.10">
    <property type="entry name" value="Winged helix-like DNA-binding domain superfamily/Winged helix DNA-binding domain"/>
    <property type="match status" value="1"/>
</dbReference>
<dbReference type="InterPro" id="IPR005819">
    <property type="entry name" value="H1/H5"/>
</dbReference>
<dbReference type="InterPro" id="IPR005818">
    <property type="entry name" value="Histone_H1/H5_H15"/>
</dbReference>
<dbReference type="InterPro" id="IPR036388">
    <property type="entry name" value="WH-like_DNA-bd_sf"/>
</dbReference>
<dbReference type="InterPro" id="IPR036390">
    <property type="entry name" value="WH_DNA-bd_sf"/>
</dbReference>
<dbReference type="Pfam" id="PF00538">
    <property type="entry name" value="Linker_histone"/>
    <property type="match status" value="1"/>
</dbReference>
<dbReference type="PRINTS" id="PR00624">
    <property type="entry name" value="HISTONEH5"/>
</dbReference>
<dbReference type="SMART" id="SM00526">
    <property type="entry name" value="H15"/>
    <property type="match status" value="1"/>
</dbReference>
<dbReference type="SUPFAM" id="SSF46785">
    <property type="entry name" value="Winged helix' DNA-binding domain"/>
    <property type="match status" value="1"/>
</dbReference>
<dbReference type="PROSITE" id="PS51504">
    <property type="entry name" value="H15"/>
    <property type="match status" value="1"/>
</dbReference>
<evidence type="ECO:0000255" key="1">
    <source>
        <dbReference type="PROSITE-ProRule" id="PRU00837"/>
    </source>
</evidence>
<evidence type="ECO:0000256" key="2">
    <source>
        <dbReference type="SAM" id="MobiDB-lite"/>
    </source>
</evidence>
<sequence length="232" mass="24531">MSDPAVEVTPAVPVASPAKAKKEKKPKSDKPKKPKAPRTHLPVSDMVVNAVKTLKERGGSSVQAIKKFLVAQYKVDVDKLSPFIKKYLKSAVEKGQLLQTKGKGASGSFKLPAAAKKEKVVKKPKKVAEKKPKKAAAPKPKKAGEKKVKKTIAKKPKAATATKIKKPVAKTTKKPAAAKPAAKKAAPKPKAAPKPKAAKKETKPKKAAAPKAKKPAVEKKPKAAKKPAAKKA</sequence>
<feature type="chain" id="PRO_0000195967" description="Histone H1A">
    <location>
        <begin position="1"/>
        <end position="232"/>
    </location>
</feature>
<feature type="domain" description="H15" evidence="1">
    <location>
        <begin position="39"/>
        <end position="113"/>
    </location>
</feature>
<feature type="region of interest" description="Disordered" evidence="2">
    <location>
        <begin position="1"/>
        <end position="42"/>
    </location>
</feature>
<feature type="region of interest" description="Disordered" evidence="2">
    <location>
        <begin position="98"/>
        <end position="232"/>
    </location>
</feature>
<feature type="compositionally biased region" description="Low complexity" evidence="2">
    <location>
        <begin position="1"/>
        <end position="18"/>
    </location>
</feature>
<feature type="compositionally biased region" description="Basic residues" evidence="2">
    <location>
        <begin position="131"/>
        <end position="141"/>
    </location>
</feature>
<feature type="compositionally biased region" description="Basic residues" evidence="2">
    <location>
        <begin position="147"/>
        <end position="173"/>
    </location>
</feature>
<feature type="compositionally biased region" description="Basic residues" evidence="2">
    <location>
        <begin position="181"/>
        <end position="214"/>
    </location>
</feature>
<feature type="compositionally biased region" description="Basic residues" evidence="2">
    <location>
        <begin position="222"/>
        <end position="232"/>
    </location>
</feature>
<reference key="1">
    <citation type="submission" date="1994-03" db="EMBL/GenBank/DDBJ databases">
        <title>The two classes of histone H1 proteins of the dipteran genus Camptochironomus are encoded by organizationally divergent genes and differ by a DNA binding motif, KAPKAP.</title>
        <authorList>
            <person name="Schulze E."/>
            <person name="Wisniewski J.R."/>
            <person name="Nagel S."/>
            <person name="Gavenis K."/>
            <person name="Grossbach U."/>
        </authorList>
    </citation>
    <scope>NUCLEOTIDE SEQUENCE [GENOMIC DNA]</scope>
</reference>
<name>H1A_CHITE</name>
<accession>P40275</accession>
<proteinExistence type="inferred from homology"/>
<organism>
    <name type="scientific">Chironomus tentans</name>
    <name type="common">Midge</name>
    <name type="synonym">Camptochironomus tentans</name>
    <dbReference type="NCBI Taxonomy" id="7153"/>
    <lineage>
        <taxon>Eukaryota</taxon>
        <taxon>Metazoa</taxon>
        <taxon>Ecdysozoa</taxon>
        <taxon>Arthropoda</taxon>
        <taxon>Hexapoda</taxon>
        <taxon>Insecta</taxon>
        <taxon>Pterygota</taxon>
        <taxon>Neoptera</taxon>
        <taxon>Endopterygota</taxon>
        <taxon>Diptera</taxon>
        <taxon>Nematocera</taxon>
        <taxon>Chironomoidea</taxon>
        <taxon>Chironomidae</taxon>
        <taxon>Chironominae</taxon>
        <taxon>Chironomus</taxon>
    </lineage>
</organism>
<keyword id="KW-0158">Chromosome</keyword>
<keyword id="KW-0238">DNA-binding</keyword>
<keyword id="KW-0539">Nucleus</keyword>
<protein>
    <recommendedName>
        <fullName>Histone H1A</fullName>
    </recommendedName>
</protein>
<comment type="function">
    <text>Histones H1 are necessary for the condensation of nucleosome chains into higher-order structures.</text>
</comment>
<comment type="subcellular location">
    <subcellularLocation>
        <location>Nucleus</location>
    </subcellularLocation>
    <subcellularLocation>
        <location>Chromosome</location>
    </subcellularLocation>
</comment>
<comment type="similarity">
    <text evidence="1">Belongs to the histone H1/H5 family.</text>
</comment>